<accession>B5ZAJ9</accession>
<dbReference type="EMBL" id="CP001184">
    <property type="protein sequence ID" value="ACI59723.1"/>
    <property type="molecule type" value="Genomic_DNA"/>
</dbReference>
<dbReference type="RefSeq" id="WP_004026326.1">
    <property type="nucleotide sequence ID" value="NC_011374.1"/>
</dbReference>
<dbReference type="SMR" id="B5ZAJ9"/>
<dbReference type="STRING" id="565575.UUR10_0026"/>
<dbReference type="KEGG" id="uue:UUR10_0026"/>
<dbReference type="eggNOG" id="COG0052">
    <property type="taxonomic scope" value="Bacteria"/>
</dbReference>
<dbReference type="HOGENOM" id="CLU_040318_0_0_14"/>
<dbReference type="OrthoDB" id="9808036at2"/>
<dbReference type="Proteomes" id="UP000002018">
    <property type="component" value="Chromosome"/>
</dbReference>
<dbReference type="GO" id="GO:0022627">
    <property type="term" value="C:cytosolic small ribosomal subunit"/>
    <property type="evidence" value="ECO:0007669"/>
    <property type="project" value="TreeGrafter"/>
</dbReference>
<dbReference type="GO" id="GO:0003735">
    <property type="term" value="F:structural constituent of ribosome"/>
    <property type="evidence" value="ECO:0007669"/>
    <property type="project" value="InterPro"/>
</dbReference>
<dbReference type="GO" id="GO:0006412">
    <property type="term" value="P:translation"/>
    <property type="evidence" value="ECO:0007669"/>
    <property type="project" value="UniProtKB-UniRule"/>
</dbReference>
<dbReference type="CDD" id="cd01425">
    <property type="entry name" value="RPS2"/>
    <property type="match status" value="1"/>
</dbReference>
<dbReference type="Gene3D" id="3.40.50.10490">
    <property type="entry name" value="Glucose-6-phosphate isomerase like protein, domain 1"/>
    <property type="match status" value="1"/>
</dbReference>
<dbReference type="Gene3D" id="1.10.287.610">
    <property type="entry name" value="Helix hairpin bin"/>
    <property type="match status" value="1"/>
</dbReference>
<dbReference type="HAMAP" id="MF_00291_B">
    <property type="entry name" value="Ribosomal_uS2_B"/>
    <property type="match status" value="1"/>
</dbReference>
<dbReference type="InterPro" id="IPR001865">
    <property type="entry name" value="Ribosomal_uS2"/>
</dbReference>
<dbReference type="InterPro" id="IPR005706">
    <property type="entry name" value="Ribosomal_uS2_bac/mit/plastid"/>
</dbReference>
<dbReference type="InterPro" id="IPR018130">
    <property type="entry name" value="Ribosomal_uS2_CS"/>
</dbReference>
<dbReference type="InterPro" id="IPR023591">
    <property type="entry name" value="Ribosomal_uS2_flav_dom_sf"/>
</dbReference>
<dbReference type="NCBIfam" id="TIGR01011">
    <property type="entry name" value="rpsB_bact"/>
    <property type="match status" value="1"/>
</dbReference>
<dbReference type="PANTHER" id="PTHR12534">
    <property type="entry name" value="30S RIBOSOMAL PROTEIN S2 PROKARYOTIC AND ORGANELLAR"/>
    <property type="match status" value="1"/>
</dbReference>
<dbReference type="PANTHER" id="PTHR12534:SF0">
    <property type="entry name" value="SMALL RIBOSOMAL SUBUNIT PROTEIN US2M"/>
    <property type="match status" value="1"/>
</dbReference>
<dbReference type="Pfam" id="PF00318">
    <property type="entry name" value="Ribosomal_S2"/>
    <property type="match status" value="1"/>
</dbReference>
<dbReference type="PRINTS" id="PR00395">
    <property type="entry name" value="RIBOSOMALS2"/>
</dbReference>
<dbReference type="SUPFAM" id="SSF52313">
    <property type="entry name" value="Ribosomal protein S2"/>
    <property type="match status" value="1"/>
</dbReference>
<dbReference type="PROSITE" id="PS00963">
    <property type="entry name" value="RIBOSOMAL_S2_2"/>
    <property type="match status" value="1"/>
</dbReference>
<feature type="chain" id="PRO_1000115072" description="Small ribosomal subunit protein uS2">
    <location>
        <begin position="1"/>
        <end position="351"/>
    </location>
</feature>
<feature type="region of interest" description="Disordered" evidence="2">
    <location>
        <begin position="302"/>
        <end position="351"/>
    </location>
</feature>
<feature type="compositionally biased region" description="Basic and acidic residues" evidence="2">
    <location>
        <begin position="340"/>
        <end position="351"/>
    </location>
</feature>
<name>RS2_UREU1</name>
<sequence>MSQMENSTKKVESVADVEVVATENAKVEQKPTSPADAIQLKVNANSTIKNLKTLVSIVKLTESGAHIGLNPKKWNPKMANYIHAKRSNNHVIDILKTILFLDRAYKFLQEVAQNGGTVMFVGTRGRVVKELIKAEAERTNSFYVTQRWLGGTLTNFANISRSLKKFNSNLALLESEEINKYSKKEQIAINKETAKLEKFYGGIKTMKQRPDVLILVDPVNDVNAIKEARKLNIPVIALANTNADPQLIDYIIPVNNYSVKSITLILGVLADAIAELRGEPTKIVGRPDSEIVLPETKSSWRQNNYDPSKRGYNPKYVNHKSTFNKFNNKKPAEATSQAKTNEKIVIKAETN</sequence>
<evidence type="ECO:0000255" key="1">
    <source>
        <dbReference type="HAMAP-Rule" id="MF_00291"/>
    </source>
</evidence>
<evidence type="ECO:0000256" key="2">
    <source>
        <dbReference type="SAM" id="MobiDB-lite"/>
    </source>
</evidence>
<evidence type="ECO:0000305" key="3"/>
<gene>
    <name evidence="1" type="primary">rpsB</name>
    <name type="ordered locus">UUR10_0026</name>
</gene>
<reference key="1">
    <citation type="submission" date="2008-10" db="EMBL/GenBank/DDBJ databases">
        <title>Genome sequence of Ureaplasma urealyticum serovar 10 ATCC-33699.</title>
        <authorList>
            <person name="Shrivastava S."/>
            <person name="Methe B.A."/>
            <person name="Glass J."/>
            <person name="White K."/>
            <person name="Duffy L.B."/>
        </authorList>
    </citation>
    <scope>NUCLEOTIDE SEQUENCE [LARGE SCALE GENOMIC DNA]</scope>
    <source>
        <strain>ATCC 33699 / Western</strain>
    </source>
</reference>
<keyword id="KW-0687">Ribonucleoprotein</keyword>
<keyword id="KW-0689">Ribosomal protein</keyword>
<proteinExistence type="inferred from homology"/>
<protein>
    <recommendedName>
        <fullName evidence="1">Small ribosomal subunit protein uS2</fullName>
    </recommendedName>
    <alternativeName>
        <fullName evidence="3">30S ribosomal protein S2</fullName>
    </alternativeName>
</protein>
<comment type="similarity">
    <text evidence="1">Belongs to the universal ribosomal protein uS2 family.</text>
</comment>
<organism>
    <name type="scientific">Ureaplasma urealyticum serovar 10 (strain ATCC 33699 / Western)</name>
    <dbReference type="NCBI Taxonomy" id="565575"/>
    <lineage>
        <taxon>Bacteria</taxon>
        <taxon>Bacillati</taxon>
        <taxon>Mycoplasmatota</taxon>
        <taxon>Mycoplasmoidales</taxon>
        <taxon>Mycoplasmoidaceae</taxon>
        <taxon>Ureaplasma</taxon>
    </lineage>
</organism>